<sequence>MEQYKYDFIEFALSRNVLKFGEFTLKSGRISPYFFNAGLFNTGRDLAKLGEYYATAIQASQIEYDVLFGPAYKGIPIATTVAVALANQFAIDKPCCFNRKEAKTHGEGGQLIGAVLEGKILLVDDVITAGTAIRESMQLIKLNQASLAGVMIALNRQEKGNGELSAIQEVERDYACQVHSIINFDDLVYFIEQSAKHAPYLTKMREYRAKYGV</sequence>
<comment type="function">
    <text evidence="1">Catalyzes the transfer of a ribosyl phosphate group from 5-phosphoribose 1-diphosphate to orotate, leading to the formation of orotidine monophosphate (OMP).</text>
</comment>
<comment type="catalytic activity">
    <reaction evidence="1">
        <text>orotidine 5'-phosphate + diphosphate = orotate + 5-phospho-alpha-D-ribose 1-diphosphate</text>
        <dbReference type="Rhea" id="RHEA:10380"/>
        <dbReference type="ChEBI" id="CHEBI:30839"/>
        <dbReference type="ChEBI" id="CHEBI:33019"/>
        <dbReference type="ChEBI" id="CHEBI:57538"/>
        <dbReference type="ChEBI" id="CHEBI:58017"/>
        <dbReference type="EC" id="2.4.2.10"/>
    </reaction>
</comment>
<comment type="cofactor">
    <cofactor evidence="1">
        <name>Mg(2+)</name>
        <dbReference type="ChEBI" id="CHEBI:18420"/>
    </cofactor>
</comment>
<comment type="pathway">
    <text evidence="1">Pyrimidine metabolism; UMP biosynthesis via de novo pathway; UMP from orotate: step 1/2.</text>
</comment>
<comment type="subunit">
    <text evidence="1">Homodimer.</text>
</comment>
<comment type="similarity">
    <text evidence="1">Belongs to the purine/pyrimidine phosphoribosyltransferase family. PyrE subfamily.</text>
</comment>
<dbReference type="EC" id="2.4.2.10" evidence="1"/>
<dbReference type="EMBL" id="AE017143">
    <property type="protein sequence ID" value="AAP96514.1"/>
    <property type="molecule type" value="Genomic_DNA"/>
</dbReference>
<dbReference type="RefSeq" id="WP_010945543.1">
    <property type="nucleotide sequence ID" value="NC_002940.2"/>
</dbReference>
<dbReference type="SMR" id="Q7VKV3"/>
<dbReference type="STRING" id="233412.HD_1759"/>
<dbReference type="KEGG" id="hdu:HD_1759"/>
<dbReference type="eggNOG" id="COG0461">
    <property type="taxonomic scope" value="Bacteria"/>
</dbReference>
<dbReference type="HOGENOM" id="CLU_074878_0_1_6"/>
<dbReference type="OrthoDB" id="9779060at2"/>
<dbReference type="UniPathway" id="UPA00070">
    <property type="reaction ID" value="UER00119"/>
</dbReference>
<dbReference type="Proteomes" id="UP000001022">
    <property type="component" value="Chromosome"/>
</dbReference>
<dbReference type="GO" id="GO:0005737">
    <property type="term" value="C:cytoplasm"/>
    <property type="evidence" value="ECO:0007669"/>
    <property type="project" value="TreeGrafter"/>
</dbReference>
<dbReference type="GO" id="GO:0000287">
    <property type="term" value="F:magnesium ion binding"/>
    <property type="evidence" value="ECO:0007669"/>
    <property type="project" value="UniProtKB-UniRule"/>
</dbReference>
<dbReference type="GO" id="GO:0004588">
    <property type="term" value="F:orotate phosphoribosyltransferase activity"/>
    <property type="evidence" value="ECO:0007669"/>
    <property type="project" value="UniProtKB-UniRule"/>
</dbReference>
<dbReference type="GO" id="GO:0006207">
    <property type="term" value="P:'de novo' pyrimidine nucleobase biosynthetic process"/>
    <property type="evidence" value="ECO:0007669"/>
    <property type="project" value="TreeGrafter"/>
</dbReference>
<dbReference type="GO" id="GO:0044205">
    <property type="term" value="P:'de novo' UMP biosynthetic process"/>
    <property type="evidence" value="ECO:0007669"/>
    <property type="project" value="UniProtKB-UniRule"/>
</dbReference>
<dbReference type="GO" id="GO:0046132">
    <property type="term" value="P:pyrimidine ribonucleoside biosynthetic process"/>
    <property type="evidence" value="ECO:0007669"/>
    <property type="project" value="TreeGrafter"/>
</dbReference>
<dbReference type="CDD" id="cd06223">
    <property type="entry name" value="PRTases_typeI"/>
    <property type="match status" value="1"/>
</dbReference>
<dbReference type="FunFam" id="3.40.50.2020:FF:000008">
    <property type="entry name" value="Orotate phosphoribosyltransferase"/>
    <property type="match status" value="1"/>
</dbReference>
<dbReference type="Gene3D" id="3.40.50.2020">
    <property type="match status" value="1"/>
</dbReference>
<dbReference type="HAMAP" id="MF_01208">
    <property type="entry name" value="PyrE"/>
    <property type="match status" value="1"/>
</dbReference>
<dbReference type="InterPro" id="IPR023031">
    <property type="entry name" value="OPRT"/>
</dbReference>
<dbReference type="InterPro" id="IPR004467">
    <property type="entry name" value="Or_phspho_trans_dom"/>
</dbReference>
<dbReference type="InterPro" id="IPR000836">
    <property type="entry name" value="PRibTrfase_dom"/>
</dbReference>
<dbReference type="InterPro" id="IPR029057">
    <property type="entry name" value="PRTase-like"/>
</dbReference>
<dbReference type="NCBIfam" id="TIGR00336">
    <property type="entry name" value="pyrE"/>
    <property type="match status" value="1"/>
</dbReference>
<dbReference type="PANTHER" id="PTHR46683">
    <property type="entry name" value="OROTATE PHOSPHORIBOSYLTRANSFERASE 1-RELATED"/>
    <property type="match status" value="1"/>
</dbReference>
<dbReference type="PANTHER" id="PTHR46683:SF1">
    <property type="entry name" value="OROTATE PHOSPHORIBOSYLTRANSFERASE 1-RELATED"/>
    <property type="match status" value="1"/>
</dbReference>
<dbReference type="Pfam" id="PF00156">
    <property type="entry name" value="Pribosyltran"/>
    <property type="match status" value="1"/>
</dbReference>
<dbReference type="SUPFAM" id="SSF53271">
    <property type="entry name" value="PRTase-like"/>
    <property type="match status" value="1"/>
</dbReference>
<dbReference type="PROSITE" id="PS00103">
    <property type="entry name" value="PUR_PYR_PR_TRANSFER"/>
    <property type="match status" value="1"/>
</dbReference>
<proteinExistence type="inferred from homology"/>
<name>PYRE_HAEDU</name>
<gene>
    <name evidence="1" type="primary">pyrE</name>
    <name type="synonym">pryE</name>
    <name type="ordered locus">HD_1759</name>
</gene>
<keyword id="KW-0328">Glycosyltransferase</keyword>
<keyword id="KW-0460">Magnesium</keyword>
<keyword id="KW-0665">Pyrimidine biosynthesis</keyword>
<keyword id="KW-1185">Reference proteome</keyword>
<keyword id="KW-0808">Transferase</keyword>
<evidence type="ECO:0000255" key="1">
    <source>
        <dbReference type="HAMAP-Rule" id="MF_01208"/>
    </source>
</evidence>
<protein>
    <recommendedName>
        <fullName evidence="1">Orotate phosphoribosyltransferase</fullName>
        <shortName evidence="1">OPRT</shortName>
        <shortName evidence="1">OPRTase</shortName>
        <ecNumber evidence="1">2.4.2.10</ecNumber>
    </recommendedName>
</protein>
<feature type="chain" id="PRO_0000110699" description="Orotate phosphoribosyltransferase">
    <location>
        <begin position="1"/>
        <end position="213"/>
    </location>
</feature>
<feature type="binding site" description="in other chain" evidence="1">
    <location>
        <position position="26"/>
    </location>
    <ligand>
        <name>5-phospho-alpha-D-ribose 1-diphosphate</name>
        <dbReference type="ChEBI" id="CHEBI:58017"/>
        <note>ligand shared between dimeric partners</note>
    </ligand>
</feature>
<feature type="binding site" evidence="1">
    <location>
        <begin position="34"/>
        <end position="35"/>
    </location>
    <ligand>
        <name>orotate</name>
        <dbReference type="ChEBI" id="CHEBI:30839"/>
    </ligand>
</feature>
<feature type="binding site" description="in other chain" evidence="1">
    <location>
        <begin position="72"/>
        <end position="73"/>
    </location>
    <ligand>
        <name>5-phospho-alpha-D-ribose 1-diphosphate</name>
        <dbReference type="ChEBI" id="CHEBI:58017"/>
        <note>ligand shared between dimeric partners</note>
    </ligand>
</feature>
<feature type="binding site" evidence="1">
    <location>
        <position position="99"/>
    </location>
    <ligand>
        <name>5-phospho-alpha-D-ribose 1-diphosphate</name>
        <dbReference type="ChEBI" id="CHEBI:58017"/>
        <note>ligand shared between dimeric partners</note>
    </ligand>
</feature>
<feature type="binding site" description="in other chain" evidence="1">
    <location>
        <position position="100"/>
    </location>
    <ligand>
        <name>5-phospho-alpha-D-ribose 1-diphosphate</name>
        <dbReference type="ChEBI" id="CHEBI:58017"/>
        <note>ligand shared between dimeric partners</note>
    </ligand>
</feature>
<feature type="binding site" evidence="1">
    <location>
        <position position="103"/>
    </location>
    <ligand>
        <name>5-phospho-alpha-D-ribose 1-diphosphate</name>
        <dbReference type="ChEBI" id="CHEBI:58017"/>
        <note>ligand shared between dimeric partners</note>
    </ligand>
</feature>
<feature type="binding site" evidence="1">
    <location>
        <position position="105"/>
    </location>
    <ligand>
        <name>5-phospho-alpha-D-ribose 1-diphosphate</name>
        <dbReference type="ChEBI" id="CHEBI:58017"/>
        <note>ligand shared between dimeric partners</note>
    </ligand>
</feature>
<feature type="binding site" description="in other chain" evidence="1">
    <location>
        <begin position="124"/>
        <end position="132"/>
    </location>
    <ligand>
        <name>5-phospho-alpha-D-ribose 1-diphosphate</name>
        <dbReference type="ChEBI" id="CHEBI:58017"/>
        <note>ligand shared between dimeric partners</note>
    </ligand>
</feature>
<feature type="binding site" evidence="1">
    <location>
        <position position="128"/>
    </location>
    <ligand>
        <name>orotate</name>
        <dbReference type="ChEBI" id="CHEBI:30839"/>
    </ligand>
</feature>
<feature type="binding site" evidence="1">
    <location>
        <position position="156"/>
    </location>
    <ligand>
        <name>orotate</name>
        <dbReference type="ChEBI" id="CHEBI:30839"/>
    </ligand>
</feature>
<accession>Q7VKV3</accession>
<reference key="1">
    <citation type="submission" date="2003-06" db="EMBL/GenBank/DDBJ databases">
        <title>The complete genome sequence of Haemophilus ducreyi.</title>
        <authorList>
            <person name="Munson R.S. Jr."/>
            <person name="Ray W.C."/>
            <person name="Mahairas G."/>
            <person name="Sabo P."/>
            <person name="Mungur R."/>
            <person name="Johnson L."/>
            <person name="Nguyen D."/>
            <person name="Wang J."/>
            <person name="Forst C."/>
            <person name="Hood L."/>
        </authorList>
    </citation>
    <scope>NUCLEOTIDE SEQUENCE [LARGE SCALE GENOMIC DNA]</scope>
    <source>
        <strain>35000HP / ATCC 700724</strain>
    </source>
</reference>
<organism>
    <name type="scientific">Haemophilus ducreyi (strain 35000HP / ATCC 700724)</name>
    <dbReference type="NCBI Taxonomy" id="233412"/>
    <lineage>
        <taxon>Bacteria</taxon>
        <taxon>Pseudomonadati</taxon>
        <taxon>Pseudomonadota</taxon>
        <taxon>Gammaproteobacteria</taxon>
        <taxon>Pasteurellales</taxon>
        <taxon>Pasteurellaceae</taxon>
        <taxon>Haemophilus</taxon>
    </lineage>
</organism>